<keyword id="KW-0472">Membrane</keyword>
<keyword id="KW-1185">Reference proteome</keyword>
<keyword id="KW-0812">Transmembrane</keyword>
<keyword id="KW-1133">Transmembrane helix</keyword>
<comment type="subcellular location">
    <subcellularLocation>
        <location evidence="2">Membrane</location>
        <topology evidence="2">Single-pass membrane protein</topology>
    </subcellularLocation>
</comment>
<sequence>MYLIWIIGGGQKDLTNKILDEIKKLYEQLDEIKDKNINSSNVQLNEFMRQNVNMLKELNQKIDKYLENNNEILKEMEKYVKEDIEHKNRMERKLKQISMLLLIVIIAIGLTISYMVILNNEYLSTQLFNYIQIAIQYLKSLLSNY</sequence>
<proteinExistence type="predicted"/>
<reference key="1">
    <citation type="journal article" date="1996" name="Science">
        <title>Complete genome sequence of the methanogenic archaeon, Methanococcus jannaschii.</title>
        <authorList>
            <person name="Bult C.J."/>
            <person name="White O."/>
            <person name="Olsen G.J."/>
            <person name="Zhou L."/>
            <person name="Fleischmann R.D."/>
            <person name="Sutton G.G."/>
            <person name="Blake J.A."/>
            <person name="FitzGerald L.M."/>
            <person name="Clayton R.A."/>
            <person name="Gocayne J.D."/>
            <person name="Kerlavage A.R."/>
            <person name="Dougherty B.A."/>
            <person name="Tomb J.-F."/>
            <person name="Adams M.D."/>
            <person name="Reich C.I."/>
            <person name="Overbeek R."/>
            <person name="Kirkness E.F."/>
            <person name="Weinstock K.G."/>
            <person name="Merrick J.M."/>
            <person name="Glodek A."/>
            <person name="Scott J.L."/>
            <person name="Geoghagen N.S.M."/>
            <person name="Weidman J.F."/>
            <person name="Fuhrmann J.L."/>
            <person name="Nguyen D."/>
            <person name="Utterback T.R."/>
            <person name="Kelley J.M."/>
            <person name="Peterson J.D."/>
            <person name="Sadow P.W."/>
            <person name="Hanna M.C."/>
            <person name="Cotton M.D."/>
            <person name="Roberts K.M."/>
            <person name="Hurst M.A."/>
            <person name="Kaine B.P."/>
            <person name="Borodovsky M."/>
            <person name="Klenk H.-P."/>
            <person name="Fraser C.M."/>
            <person name="Smith H.O."/>
            <person name="Woese C.R."/>
            <person name="Venter J.C."/>
        </authorList>
    </citation>
    <scope>NUCLEOTIDE SEQUENCE [LARGE SCALE GENOMIC DNA]</scope>
    <source>
        <strain>ATCC 43067 / DSM 2661 / JAL-1 / JCM 10045 / NBRC 100440</strain>
    </source>
</reference>
<dbReference type="EMBL" id="L77117">
    <property type="protein sequence ID" value="AAB99431.1"/>
    <property type="molecule type" value="Genomic_DNA"/>
</dbReference>
<dbReference type="SMR" id="P81328"/>
<dbReference type="STRING" id="243232.MJ_1417.1"/>
<dbReference type="PaxDb" id="243232-MJ_1417.1"/>
<dbReference type="EnsemblBacteria" id="AAB99431">
    <property type="protein sequence ID" value="AAB99431"/>
    <property type="gene ID" value="MJ_1417.1"/>
</dbReference>
<dbReference type="KEGG" id="mja:MJ_1417.1"/>
<dbReference type="HOGENOM" id="CLU_1782506_0_0_2"/>
<dbReference type="InParanoid" id="P81328"/>
<dbReference type="Proteomes" id="UP000000805">
    <property type="component" value="Chromosome"/>
</dbReference>
<dbReference type="GO" id="GO:0016020">
    <property type="term" value="C:membrane"/>
    <property type="evidence" value="ECO:0007669"/>
    <property type="project" value="UniProtKB-SubCell"/>
</dbReference>
<organism>
    <name type="scientific">Methanocaldococcus jannaschii (strain ATCC 43067 / DSM 2661 / JAL-1 / JCM 10045 / NBRC 100440)</name>
    <name type="common">Methanococcus jannaschii</name>
    <dbReference type="NCBI Taxonomy" id="243232"/>
    <lineage>
        <taxon>Archaea</taxon>
        <taxon>Methanobacteriati</taxon>
        <taxon>Methanobacteriota</taxon>
        <taxon>Methanomada group</taxon>
        <taxon>Methanococci</taxon>
        <taxon>Methanococcales</taxon>
        <taxon>Methanocaldococcaceae</taxon>
        <taxon>Methanocaldococcus</taxon>
    </lineage>
</organism>
<evidence type="ECO:0000255" key="1"/>
<evidence type="ECO:0000305" key="2"/>
<gene>
    <name type="ordered locus">MJ1417.1</name>
</gene>
<feature type="chain" id="PRO_0000107316" description="Uncharacterized protein MJ1417.1">
    <location>
        <begin position="1"/>
        <end position="145"/>
    </location>
</feature>
<feature type="transmembrane region" description="Helical" evidence="1">
    <location>
        <begin position="97"/>
        <end position="117"/>
    </location>
</feature>
<accession>P81328</accession>
<protein>
    <recommendedName>
        <fullName>Uncharacterized protein MJ1417.1</fullName>
    </recommendedName>
</protein>
<name>YE1A_METJA</name>